<reference key="1">
    <citation type="journal article" date="1992" name="Gene">
        <title>Sequence of a cluster of genes controlling synthesis and secretion of alkaline protease in Pseudomonas aeruginosa: relationships to other secretory pathways.</title>
        <authorList>
            <person name="Duong F."/>
            <person name="Lazdunski A."/>
            <person name="Cami B."/>
            <person name="Murgier M."/>
        </authorList>
    </citation>
    <scope>NUCLEOTIDE SEQUENCE [GENOMIC DNA]</scope>
    <source>
        <strain>ATCC 15692 / DSM 22644 / CIP 104116 / JCM 14847 / LMG 12228 / 1C / PRS 101 / PAO1</strain>
    </source>
</reference>
<reference key="2">
    <citation type="journal article" date="2000" name="Nature">
        <title>Complete genome sequence of Pseudomonas aeruginosa PAO1, an opportunistic pathogen.</title>
        <authorList>
            <person name="Stover C.K."/>
            <person name="Pham X.-Q.T."/>
            <person name="Erwin A.L."/>
            <person name="Mizoguchi S.D."/>
            <person name="Warrener P."/>
            <person name="Hickey M.J."/>
            <person name="Brinkman F.S.L."/>
            <person name="Hufnagle W.O."/>
            <person name="Kowalik D.J."/>
            <person name="Lagrou M."/>
            <person name="Garber R.L."/>
            <person name="Goltry L."/>
            <person name="Tolentino E."/>
            <person name="Westbrock-Wadman S."/>
            <person name="Yuan Y."/>
            <person name="Brody L.L."/>
            <person name="Coulter S.N."/>
            <person name="Folger K.R."/>
            <person name="Kas A."/>
            <person name="Larbig K."/>
            <person name="Lim R.M."/>
            <person name="Smith K.A."/>
            <person name="Spencer D.H."/>
            <person name="Wong G.K.-S."/>
            <person name="Wu Z."/>
            <person name="Paulsen I.T."/>
            <person name="Reizer J."/>
            <person name="Saier M.H. Jr."/>
            <person name="Hancock R.E.W."/>
            <person name="Lory S."/>
            <person name="Olson M.V."/>
        </authorList>
    </citation>
    <scope>NUCLEOTIDE SEQUENCE [LARGE SCALE GENOMIC DNA]</scope>
    <source>
        <strain>ATCC 15692 / DSM 22644 / CIP 104116 / JCM 14847 / LMG 12228 / 1C / PRS 101 / PAO1</strain>
    </source>
</reference>
<reference key="3">
    <citation type="journal article" date="2001" name="J. Biol. Chem.">
        <title>Crystal structure of a complex between Pseudomonas aeruginosa alkaline protease and its cognate inhibitor: inhibition by a zinc-NH2 coordinative bond.</title>
        <authorList>
            <person name="Hege T."/>
            <person name="Feltzer R.E."/>
            <person name="Gray R.D."/>
            <person name="Baumann U."/>
        </authorList>
    </citation>
    <scope>X-RAY CRYSTALLOGRAPHY (1.74 ANGSTROMS) IN COMPLEX WITH PROTEASE</scope>
</reference>
<gene>
    <name type="primary">inh</name>
    <name type="synonym">aprI</name>
    <name type="ordered locus">PA1250</name>
</gene>
<keyword id="KW-0002">3D-structure</keyword>
<keyword id="KW-1015">Disulfide bond</keyword>
<keyword id="KW-0481">Metalloenzyme inhibitor</keyword>
<keyword id="KW-0483">Metalloprotease inhibitor</keyword>
<keyword id="KW-0574">Periplasm</keyword>
<keyword id="KW-0646">Protease inhibitor</keyword>
<keyword id="KW-1185">Reference proteome</keyword>
<keyword id="KW-0732">Signal</keyword>
<dbReference type="EMBL" id="X64558">
    <property type="protein sequence ID" value="CAA45859.1"/>
    <property type="molecule type" value="Genomic_DNA"/>
</dbReference>
<dbReference type="EMBL" id="AE004091">
    <property type="protein sequence ID" value="AAG04639.1"/>
    <property type="molecule type" value="Genomic_DNA"/>
</dbReference>
<dbReference type="PIR" id="S26700">
    <property type="entry name" value="S26700"/>
</dbReference>
<dbReference type="RefSeq" id="NP_249941.1">
    <property type="nucleotide sequence ID" value="NC_002516.2"/>
</dbReference>
<dbReference type="RefSeq" id="WP_003082543.1">
    <property type="nucleotide sequence ID" value="NZ_QZGE01000005.1"/>
</dbReference>
<dbReference type="PDB" id="1JIW">
    <property type="method" value="X-ray"/>
    <property type="resolution" value="1.74 A"/>
    <property type="chains" value="I=26-131"/>
</dbReference>
<dbReference type="PDB" id="2RN4">
    <property type="method" value="NMR"/>
    <property type="chains" value="A=26-131"/>
</dbReference>
<dbReference type="PDBsum" id="1JIW"/>
<dbReference type="PDBsum" id="2RN4"/>
<dbReference type="BMRB" id="Q03026"/>
<dbReference type="SMR" id="Q03026"/>
<dbReference type="MINT" id="Q03026"/>
<dbReference type="STRING" id="208964.PA1250"/>
<dbReference type="MEROPS" id="I38.002"/>
<dbReference type="PaxDb" id="208964-PA1250"/>
<dbReference type="DNASU" id="881261"/>
<dbReference type="GeneID" id="881261"/>
<dbReference type="KEGG" id="pae:PA1250"/>
<dbReference type="PATRIC" id="fig|208964.12.peg.1298"/>
<dbReference type="PseudoCAP" id="PA1250"/>
<dbReference type="HOGENOM" id="CLU_155270_1_0_6"/>
<dbReference type="InParanoid" id="Q03026"/>
<dbReference type="OrthoDB" id="6996810at2"/>
<dbReference type="BioCyc" id="PAER208964:G1FZ6-1275-MONOMER"/>
<dbReference type="EvolutionaryTrace" id="Q03026"/>
<dbReference type="Proteomes" id="UP000002438">
    <property type="component" value="Chromosome"/>
</dbReference>
<dbReference type="GO" id="GO:0042597">
    <property type="term" value="C:periplasmic space"/>
    <property type="evidence" value="ECO:0007669"/>
    <property type="project" value="UniProtKB-SubCell"/>
</dbReference>
<dbReference type="GO" id="GO:0008191">
    <property type="term" value="F:metalloendopeptidase inhibitor activity"/>
    <property type="evidence" value="ECO:0007669"/>
    <property type="project" value="InterPro"/>
</dbReference>
<dbReference type="Gene3D" id="2.40.128.10">
    <property type="match status" value="1"/>
</dbReference>
<dbReference type="InterPro" id="IPR022815">
    <property type="entry name" value="Inh"/>
</dbReference>
<dbReference type="InterPro" id="IPR021140">
    <property type="entry name" value="Inh/Omp19"/>
</dbReference>
<dbReference type="InterPro" id="IPR016085">
    <property type="entry name" value="Protease_inh_b-brl_dom"/>
</dbReference>
<dbReference type="Pfam" id="PF02974">
    <property type="entry name" value="Inh"/>
    <property type="match status" value="1"/>
</dbReference>
<dbReference type="PRINTS" id="PR01274">
    <property type="entry name" value="MPTASEINHBTR"/>
</dbReference>
<dbReference type="SUPFAM" id="SSF50882">
    <property type="entry name" value="beta-Barrel protease inhibitors"/>
    <property type="match status" value="1"/>
</dbReference>
<sequence>MSASAKLSRMVCLLCGFFSTGISMASSLILLSASDLAGQWTLQQDEAPAICHLELRDSEVAEASGYDLGGDTACLTRWLPSEPRAWRPTPAGIALLERGGLTLMLLGRQGEGDYRVQKGDGGQLVLRRATP</sequence>
<comment type="function">
    <text evidence="1">Inhibitor of the alkaline protease. It forms a non-covalent bond with the protease and may prevent its autocatalytic cleavage in the periplasm (By similarity).</text>
</comment>
<comment type="subcellular location">
    <subcellularLocation>
        <location>Periplasm</location>
    </subcellularLocation>
</comment>
<comment type="similarity">
    <text evidence="2">Belongs to the protease inhibitor I38 family.</text>
</comment>
<feature type="signal peptide" evidence="1">
    <location>
        <begin position="1"/>
        <end position="26"/>
    </location>
</feature>
<feature type="chain" id="PRO_0000026717" description="Proteinase inhibitor">
    <location>
        <begin position="27"/>
        <end position="131"/>
    </location>
</feature>
<feature type="disulfide bond" evidence="1">
    <location>
        <begin position="51"/>
        <end position="74"/>
    </location>
</feature>
<feature type="helix" evidence="3">
    <location>
        <begin position="33"/>
        <end position="36"/>
    </location>
</feature>
<feature type="strand" evidence="3">
    <location>
        <begin position="38"/>
        <end position="44"/>
    </location>
</feature>
<feature type="strand" evidence="3">
    <location>
        <begin position="50"/>
        <end position="60"/>
    </location>
</feature>
<feature type="turn" evidence="3">
    <location>
        <begin position="61"/>
        <end position="64"/>
    </location>
</feature>
<feature type="strand" evidence="3">
    <location>
        <begin position="65"/>
        <end position="71"/>
    </location>
</feature>
<feature type="helix" evidence="3">
    <location>
        <begin position="72"/>
        <end position="77"/>
    </location>
</feature>
<feature type="strand" evidence="3">
    <location>
        <begin position="79"/>
        <end position="81"/>
    </location>
</feature>
<feature type="strand" evidence="3">
    <location>
        <begin position="85"/>
        <end position="89"/>
    </location>
</feature>
<feature type="strand" evidence="3">
    <location>
        <begin position="92"/>
        <end position="96"/>
    </location>
</feature>
<feature type="strand" evidence="4">
    <location>
        <begin position="98"/>
        <end position="100"/>
    </location>
</feature>
<feature type="strand" evidence="3">
    <location>
        <begin position="102"/>
        <end position="110"/>
    </location>
</feature>
<feature type="strand" evidence="3">
    <location>
        <begin position="113"/>
        <end position="117"/>
    </location>
</feature>
<feature type="strand" evidence="3">
    <location>
        <begin position="119"/>
        <end position="121"/>
    </location>
</feature>
<feature type="strand" evidence="3">
    <location>
        <begin position="123"/>
        <end position="128"/>
    </location>
</feature>
<proteinExistence type="evidence at protein level"/>
<protein>
    <recommendedName>
        <fullName>Proteinase inhibitor</fullName>
    </recommendedName>
    <alternativeName>
        <fullName>Aprin</fullName>
    </alternativeName>
</protein>
<name>INH_PSEAE</name>
<accession>Q03026</accession>
<evidence type="ECO:0000250" key="1"/>
<evidence type="ECO:0000305" key="2"/>
<evidence type="ECO:0007829" key="3">
    <source>
        <dbReference type="PDB" id="1JIW"/>
    </source>
</evidence>
<evidence type="ECO:0007829" key="4">
    <source>
        <dbReference type="PDB" id="2RN4"/>
    </source>
</evidence>
<organism>
    <name type="scientific">Pseudomonas aeruginosa (strain ATCC 15692 / DSM 22644 / CIP 104116 / JCM 14847 / LMG 12228 / 1C / PRS 101 / PAO1)</name>
    <dbReference type="NCBI Taxonomy" id="208964"/>
    <lineage>
        <taxon>Bacteria</taxon>
        <taxon>Pseudomonadati</taxon>
        <taxon>Pseudomonadota</taxon>
        <taxon>Gammaproteobacteria</taxon>
        <taxon>Pseudomonadales</taxon>
        <taxon>Pseudomonadaceae</taxon>
        <taxon>Pseudomonas</taxon>
    </lineage>
</organism>